<organism>
    <name type="scientific">Xenopus tropicalis</name>
    <name type="common">Western clawed frog</name>
    <name type="synonym">Silurana tropicalis</name>
    <dbReference type="NCBI Taxonomy" id="8364"/>
    <lineage>
        <taxon>Eukaryota</taxon>
        <taxon>Metazoa</taxon>
        <taxon>Chordata</taxon>
        <taxon>Craniata</taxon>
        <taxon>Vertebrata</taxon>
        <taxon>Euteleostomi</taxon>
        <taxon>Amphibia</taxon>
        <taxon>Batrachia</taxon>
        <taxon>Anura</taxon>
        <taxon>Pipoidea</taxon>
        <taxon>Pipidae</taxon>
        <taxon>Xenopodinae</taxon>
        <taxon>Xenopus</taxon>
        <taxon>Silurana</taxon>
    </lineage>
</organism>
<evidence type="ECO:0000250" key="1">
    <source>
        <dbReference type="UniProtKB" id="Q9BRJ2"/>
    </source>
</evidence>
<evidence type="ECO:0000255" key="2"/>
<evidence type="ECO:0000305" key="3"/>
<keyword id="KW-0496">Mitochondrion</keyword>
<keyword id="KW-1185">Reference proteome</keyword>
<keyword id="KW-0687">Ribonucleoprotein</keyword>
<keyword id="KW-0689">Ribosomal protein</keyword>
<keyword id="KW-0809">Transit peptide</keyword>
<name>RM45_XENTR</name>
<comment type="function">
    <text evidence="1">Component of the mitochondrial large ribosomal subunit (mt-LSU). Within the mitochondrial ribosomes, required to direct the nascent polypeptide toward the tunnel exit and position the exit at a distance from the membrane surface.</text>
</comment>
<comment type="subunit">
    <text evidence="1">Component of the mitochondrial ribosome large subunit (39S) which comprises a 16S rRNA and about 50 distinct proteins.</text>
</comment>
<comment type="subcellular location">
    <subcellularLocation>
        <location evidence="1">Mitochondrion</location>
    </subcellularLocation>
</comment>
<comment type="similarity">
    <text evidence="3">Belongs to the mitochondrion-specific ribosomal protein mL45 family.</text>
</comment>
<protein>
    <recommendedName>
        <fullName evidence="3">Large ribosomal subunit protein mL45</fullName>
    </recommendedName>
    <alternativeName>
        <fullName>39S ribosomal protein L45, mitochondrial</fullName>
        <shortName>L45mt</shortName>
        <shortName>MRP-L45</shortName>
    </alternativeName>
</protein>
<proteinExistence type="evidence at transcript level"/>
<feature type="transit peptide" description="Mitochondrion" evidence="2">
    <location>
        <begin position="1"/>
        <end status="unknown"/>
    </location>
</feature>
<feature type="chain" id="PRO_0000045910" description="Large ribosomal subunit protein mL45">
    <location>
        <begin status="unknown"/>
        <end position="309"/>
    </location>
</feature>
<gene>
    <name type="primary">mrpl45</name>
</gene>
<reference key="1">
    <citation type="submission" date="2005-06" db="EMBL/GenBank/DDBJ databases">
        <authorList>
            <consortium name="NIH - Xenopus Gene Collection (XGC) project"/>
        </authorList>
    </citation>
    <scope>NUCLEOTIDE SEQUENCE [LARGE SCALE MRNA]</scope>
</reference>
<sequence>MAASMRMYRAVGALGLASILNPARMAAPVLVMPTRTKKRYFIPPAVGAKHKTMADMISKARAAGVVTPHETMERPINIACTAGIFDPYIPPEGDARLSSLSKEGLKQRTQQLKQTAASQLAIRKVKEYDSEFTTKTFPEKAQELFIAAHQCLTKFDRHELHTLVTERCYPEMVRGNRYRTIQWSFVESIEAPRVVQVRCPEMVSKGNLYAQVTVRMHNKQSLTIYDRFGRVMCGSEEPRDVLEYVVFERHMVNPYGTWRMHGKIVPSWAPPKEPIVKTVLLPGPAVDPLQELEDISLEKTEPVLQQWYK</sequence>
<dbReference type="EMBL" id="BC098093">
    <property type="protein sequence ID" value="AAH98093.1"/>
    <property type="molecule type" value="mRNA"/>
</dbReference>
<dbReference type="RefSeq" id="NP_001027509.1">
    <property type="nucleotide sequence ID" value="NM_001032338.1"/>
</dbReference>
<dbReference type="SMR" id="Q4QQQ4"/>
<dbReference type="FunCoup" id="Q4QQQ4">
    <property type="interactions" value="1045"/>
</dbReference>
<dbReference type="STRING" id="8364.ENSXETP00000049878"/>
<dbReference type="DNASU" id="613101"/>
<dbReference type="GeneID" id="613101"/>
<dbReference type="KEGG" id="xtr:613101"/>
<dbReference type="AGR" id="Xenbase:XB-GENE-958318"/>
<dbReference type="CTD" id="84311"/>
<dbReference type="Xenbase" id="XB-GENE-958318">
    <property type="gene designation" value="mrpl45"/>
</dbReference>
<dbReference type="InParanoid" id="Q4QQQ4"/>
<dbReference type="OMA" id="DWAPPKD"/>
<dbReference type="OrthoDB" id="19619at2759"/>
<dbReference type="Proteomes" id="UP000008143">
    <property type="component" value="Chromosome 10"/>
</dbReference>
<dbReference type="Bgee" id="ENSXETG00000014731">
    <property type="expression patterns" value="Expressed in blastula and 13 other cell types or tissues"/>
</dbReference>
<dbReference type="ExpressionAtlas" id="Q4QQQ4">
    <property type="expression patterns" value="differential"/>
</dbReference>
<dbReference type="GO" id="GO:0005762">
    <property type="term" value="C:mitochondrial large ribosomal subunit"/>
    <property type="evidence" value="ECO:0000250"/>
    <property type="project" value="UniProtKB"/>
</dbReference>
<dbReference type="GO" id="GO:0005739">
    <property type="term" value="C:mitochondrion"/>
    <property type="evidence" value="ECO:0000250"/>
    <property type="project" value="UniProtKB"/>
</dbReference>
<dbReference type="GO" id="GO:0003735">
    <property type="term" value="F:structural constituent of ribosome"/>
    <property type="evidence" value="ECO:0000250"/>
    <property type="project" value="UniProtKB"/>
</dbReference>
<dbReference type="GO" id="GO:0032543">
    <property type="term" value="P:mitochondrial translation"/>
    <property type="evidence" value="ECO:0000250"/>
    <property type="project" value="UniProtKB"/>
</dbReference>
<dbReference type="FunFam" id="3.10.450.240:FF:000003">
    <property type="entry name" value="39S ribosomal protein L45, mitochondrial"/>
    <property type="match status" value="1"/>
</dbReference>
<dbReference type="Gene3D" id="3.10.450.240">
    <property type="match status" value="1"/>
</dbReference>
<dbReference type="InterPro" id="IPR051975">
    <property type="entry name" value="mtLSU_mL45"/>
</dbReference>
<dbReference type="InterPro" id="IPR032710">
    <property type="entry name" value="NTF2-like_dom_sf"/>
</dbReference>
<dbReference type="InterPro" id="IPR007379">
    <property type="entry name" value="Tim44-like_dom"/>
</dbReference>
<dbReference type="PANTHER" id="PTHR28554">
    <property type="entry name" value="39S RIBOSOMAL PROTEIN L45, MITOCHONDRIAL"/>
    <property type="match status" value="1"/>
</dbReference>
<dbReference type="PANTHER" id="PTHR28554:SF1">
    <property type="entry name" value="LARGE RIBOSOMAL SUBUNIT PROTEIN ML45"/>
    <property type="match status" value="1"/>
</dbReference>
<dbReference type="Pfam" id="PF04280">
    <property type="entry name" value="Tim44"/>
    <property type="match status" value="1"/>
</dbReference>
<dbReference type="SMART" id="SM00978">
    <property type="entry name" value="Tim44"/>
    <property type="match status" value="1"/>
</dbReference>
<dbReference type="SUPFAM" id="SSF54427">
    <property type="entry name" value="NTF2-like"/>
    <property type="match status" value="1"/>
</dbReference>
<accession>Q4QQQ4</accession>